<dbReference type="EMBL" id="CP000749">
    <property type="protein sequence ID" value="ABR71545.1"/>
    <property type="molecule type" value="Genomic_DNA"/>
</dbReference>
<dbReference type="SMR" id="A6VYL6"/>
<dbReference type="STRING" id="400668.Mmwyl1_2632"/>
<dbReference type="KEGG" id="mmw:Mmwyl1_2632"/>
<dbReference type="eggNOG" id="COG1923">
    <property type="taxonomic scope" value="Bacteria"/>
</dbReference>
<dbReference type="HOGENOM" id="CLU_113688_2_2_6"/>
<dbReference type="OrthoDB" id="9799751at2"/>
<dbReference type="GO" id="GO:0005829">
    <property type="term" value="C:cytosol"/>
    <property type="evidence" value="ECO:0007669"/>
    <property type="project" value="TreeGrafter"/>
</dbReference>
<dbReference type="GO" id="GO:0003723">
    <property type="term" value="F:RNA binding"/>
    <property type="evidence" value="ECO:0007669"/>
    <property type="project" value="UniProtKB-UniRule"/>
</dbReference>
<dbReference type="GO" id="GO:0006355">
    <property type="term" value="P:regulation of DNA-templated transcription"/>
    <property type="evidence" value="ECO:0007669"/>
    <property type="project" value="InterPro"/>
</dbReference>
<dbReference type="GO" id="GO:0043487">
    <property type="term" value="P:regulation of RNA stability"/>
    <property type="evidence" value="ECO:0007669"/>
    <property type="project" value="TreeGrafter"/>
</dbReference>
<dbReference type="GO" id="GO:0045974">
    <property type="term" value="P:regulation of translation, ncRNA-mediated"/>
    <property type="evidence" value="ECO:0007669"/>
    <property type="project" value="TreeGrafter"/>
</dbReference>
<dbReference type="CDD" id="cd01716">
    <property type="entry name" value="Hfq"/>
    <property type="match status" value="1"/>
</dbReference>
<dbReference type="FunFam" id="2.30.30.100:FF:000001">
    <property type="entry name" value="RNA-binding protein Hfq"/>
    <property type="match status" value="1"/>
</dbReference>
<dbReference type="Gene3D" id="2.30.30.100">
    <property type="match status" value="1"/>
</dbReference>
<dbReference type="HAMAP" id="MF_00436">
    <property type="entry name" value="Hfq"/>
    <property type="match status" value="1"/>
</dbReference>
<dbReference type="InterPro" id="IPR005001">
    <property type="entry name" value="Hfq"/>
</dbReference>
<dbReference type="InterPro" id="IPR010920">
    <property type="entry name" value="LSM_dom_sf"/>
</dbReference>
<dbReference type="InterPro" id="IPR047575">
    <property type="entry name" value="Sm"/>
</dbReference>
<dbReference type="NCBIfam" id="TIGR02383">
    <property type="entry name" value="Hfq"/>
    <property type="match status" value="1"/>
</dbReference>
<dbReference type="NCBIfam" id="NF001602">
    <property type="entry name" value="PRK00395.1"/>
    <property type="match status" value="1"/>
</dbReference>
<dbReference type="PANTHER" id="PTHR34772">
    <property type="entry name" value="RNA-BINDING PROTEIN HFQ"/>
    <property type="match status" value="1"/>
</dbReference>
<dbReference type="PANTHER" id="PTHR34772:SF1">
    <property type="entry name" value="RNA-BINDING PROTEIN HFQ"/>
    <property type="match status" value="1"/>
</dbReference>
<dbReference type="Pfam" id="PF17209">
    <property type="entry name" value="Hfq"/>
    <property type="match status" value="1"/>
</dbReference>
<dbReference type="SUPFAM" id="SSF50182">
    <property type="entry name" value="Sm-like ribonucleoproteins"/>
    <property type="match status" value="1"/>
</dbReference>
<dbReference type="PROSITE" id="PS52002">
    <property type="entry name" value="SM"/>
    <property type="match status" value="1"/>
</dbReference>
<keyword id="KW-0694">RNA-binding</keyword>
<keyword id="KW-0346">Stress response</keyword>
<evidence type="ECO:0000255" key="1">
    <source>
        <dbReference type="HAMAP-Rule" id="MF_00436"/>
    </source>
</evidence>
<evidence type="ECO:0000255" key="2">
    <source>
        <dbReference type="PROSITE-ProRule" id="PRU01346"/>
    </source>
</evidence>
<gene>
    <name evidence="1" type="primary">hfq</name>
    <name type="ordered locus">Mmwyl1_2632</name>
</gene>
<name>HFQ_MARMS</name>
<organism>
    <name type="scientific">Marinomonas sp. (strain MWYL1)</name>
    <dbReference type="NCBI Taxonomy" id="400668"/>
    <lineage>
        <taxon>Bacteria</taxon>
        <taxon>Pseudomonadati</taxon>
        <taxon>Pseudomonadota</taxon>
        <taxon>Gammaproteobacteria</taxon>
        <taxon>Oceanospirillales</taxon>
        <taxon>Oceanospirillaceae</taxon>
        <taxon>Marinomonas</taxon>
    </lineage>
</organism>
<proteinExistence type="inferred from homology"/>
<protein>
    <recommendedName>
        <fullName evidence="1">RNA-binding protein Hfq</fullName>
    </recommendedName>
</protein>
<comment type="function">
    <text evidence="1">RNA chaperone that binds small regulatory RNA (sRNAs) and mRNAs to facilitate mRNA translational regulation in response to envelope stress, environmental stress and changes in metabolite concentrations. Also binds with high specificity to tRNAs.</text>
</comment>
<comment type="subunit">
    <text evidence="1">Homohexamer.</text>
</comment>
<comment type="similarity">
    <text evidence="1">Belongs to the Hfq family.</text>
</comment>
<feature type="chain" id="PRO_1000080671" description="RNA-binding protein Hfq">
    <location>
        <begin position="1"/>
        <end position="81"/>
    </location>
</feature>
<feature type="domain" description="Sm" evidence="2">
    <location>
        <begin position="9"/>
        <end position="68"/>
    </location>
</feature>
<reference key="1">
    <citation type="submission" date="2007-06" db="EMBL/GenBank/DDBJ databases">
        <title>Complete sequence of Marinomonas sp. MWYL1.</title>
        <authorList>
            <consortium name="US DOE Joint Genome Institute"/>
            <person name="Copeland A."/>
            <person name="Lucas S."/>
            <person name="Lapidus A."/>
            <person name="Barry K."/>
            <person name="Glavina del Rio T."/>
            <person name="Dalin E."/>
            <person name="Tice H."/>
            <person name="Pitluck S."/>
            <person name="Kiss H."/>
            <person name="Brettin T."/>
            <person name="Bruce D."/>
            <person name="Detter J.C."/>
            <person name="Han C."/>
            <person name="Schmutz J."/>
            <person name="Larimer F."/>
            <person name="Land M."/>
            <person name="Hauser L."/>
            <person name="Kyrpides N."/>
            <person name="Kim E."/>
            <person name="Johnston A.W.B."/>
            <person name="Todd J.D."/>
            <person name="Rogers R."/>
            <person name="Wexler M."/>
            <person name="Bond P.L."/>
            <person name="Li Y."/>
            <person name="Richardson P."/>
        </authorList>
    </citation>
    <scope>NUCLEOTIDE SEQUENCE [LARGE SCALE GENOMIC DNA]</scope>
    <source>
        <strain>MWYL1</strain>
    </source>
</reference>
<sequence>MSKGQSLQDPYLNILRKERVPVSIFLVNGIKLQGQIESFDQFVILLKNTVSQMVYKHAISTVVPSRTIRIPSPDQPEDDAE</sequence>
<accession>A6VYL6</accession>